<feature type="chain" id="PRO_1000093396" description="Endonuclease MutS2">
    <location>
        <begin position="1"/>
        <end position="779"/>
    </location>
</feature>
<feature type="domain" description="Smr" evidence="1">
    <location>
        <begin position="704"/>
        <end position="779"/>
    </location>
</feature>
<feature type="binding site" evidence="1">
    <location>
        <begin position="328"/>
        <end position="335"/>
    </location>
    <ligand>
        <name>ATP</name>
        <dbReference type="ChEBI" id="CHEBI:30616"/>
    </ligand>
</feature>
<accession>A2RCQ8</accession>
<proteinExistence type="inferred from homology"/>
<name>MUTS2_STRPG</name>
<dbReference type="EC" id="3.1.-.-" evidence="1"/>
<dbReference type="EC" id="3.6.4.-" evidence="1"/>
<dbReference type="EMBL" id="AM295007">
    <property type="protein sequence ID" value="CAM29631.1"/>
    <property type="molecule type" value="Genomic_DNA"/>
</dbReference>
<dbReference type="RefSeq" id="WP_011888615.1">
    <property type="nucleotide sequence ID" value="NC_009332.1"/>
</dbReference>
<dbReference type="SMR" id="A2RCQ8"/>
<dbReference type="KEGG" id="spf:SpyM50289"/>
<dbReference type="HOGENOM" id="CLU_011252_2_1_9"/>
<dbReference type="GO" id="GO:0005524">
    <property type="term" value="F:ATP binding"/>
    <property type="evidence" value="ECO:0007669"/>
    <property type="project" value="UniProtKB-UniRule"/>
</dbReference>
<dbReference type="GO" id="GO:0016887">
    <property type="term" value="F:ATP hydrolysis activity"/>
    <property type="evidence" value="ECO:0007669"/>
    <property type="project" value="InterPro"/>
</dbReference>
<dbReference type="GO" id="GO:0140664">
    <property type="term" value="F:ATP-dependent DNA damage sensor activity"/>
    <property type="evidence" value="ECO:0007669"/>
    <property type="project" value="InterPro"/>
</dbReference>
<dbReference type="GO" id="GO:0004519">
    <property type="term" value="F:endonuclease activity"/>
    <property type="evidence" value="ECO:0007669"/>
    <property type="project" value="UniProtKB-UniRule"/>
</dbReference>
<dbReference type="GO" id="GO:0030983">
    <property type="term" value="F:mismatched DNA binding"/>
    <property type="evidence" value="ECO:0007669"/>
    <property type="project" value="InterPro"/>
</dbReference>
<dbReference type="GO" id="GO:0043023">
    <property type="term" value="F:ribosomal large subunit binding"/>
    <property type="evidence" value="ECO:0007669"/>
    <property type="project" value="UniProtKB-UniRule"/>
</dbReference>
<dbReference type="GO" id="GO:0019843">
    <property type="term" value="F:rRNA binding"/>
    <property type="evidence" value="ECO:0007669"/>
    <property type="project" value="UniProtKB-UniRule"/>
</dbReference>
<dbReference type="GO" id="GO:0006298">
    <property type="term" value="P:mismatch repair"/>
    <property type="evidence" value="ECO:0007669"/>
    <property type="project" value="InterPro"/>
</dbReference>
<dbReference type="GO" id="GO:0045910">
    <property type="term" value="P:negative regulation of DNA recombination"/>
    <property type="evidence" value="ECO:0007669"/>
    <property type="project" value="InterPro"/>
</dbReference>
<dbReference type="GO" id="GO:0072344">
    <property type="term" value="P:rescue of stalled ribosome"/>
    <property type="evidence" value="ECO:0007669"/>
    <property type="project" value="UniProtKB-UniRule"/>
</dbReference>
<dbReference type="CDD" id="cd03280">
    <property type="entry name" value="ABC_MutS2"/>
    <property type="match status" value="1"/>
</dbReference>
<dbReference type="FunFam" id="3.30.1370.110:FF:000004">
    <property type="entry name" value="Endonuclease MutS2"/>
    <property type="match status" value="1"/>
</dbReference>
<dbReference type="FunFam" id="3.40.50.300:FF:000830">
    <property type="entry name" value="Endonuclease MutS2"/>
    <property type="match status" value="1"/>
</dbReference>
<dbReference type="Gene3D" id="3.30.1370.110">
    <property type="match status" value="1"/>
</dbReference>
<dbReference type="Gene3D" id="3.40.50.300">
    <property type="entry name" value="P-loop containing nucleotide triphosphate hydrolases"/>
    <property type="match status" value="1"/>
</dbReference>
<dbReference type="HAMAP" id="MF_00092">
    <property type="entry name" value="MutS2"/>
    <property type="match status" value="1"/>
</dbReference>
<dbReference type="InterPro" id="IPR000432">
    <property type="entry name" value="DNA_mismatch_repair_MutS_C"/>
</dbReference>
<dbReference type="InterPro" id="IPR007696">
    <property type="entry name" value="DNA_mismatch_repair_MutS_core"/>
</dbReference>
<dbReference type="InterPro" id="IPR036187">
    <property type="entry name" value="DNA_mismatch_repair_MutS_sf"/>
</dbReference>
<dbReference type="InterPro" id="IPR046893">
    <property type="entry name" value="MSSS"/>
</dbReference>
<dbReference type="InterPro" id="IPR045076">
    <property type="entry name" value="MutS"/>
</dbReference>
<dbReference type="InterPro" id="IPR005747">
    <property type="entry name" value="MutS2"/>
</dbReference>
<dbReference type="InterPro" id="IPR027417">
    <property type="entry name" value="P-loop_NTPase"/>
</dbReference>
<dbReference type="InterPro" id="IPR002625">
    <property type="entry name" value="Smr_dom"/>
</dbReference>
<dbReference type="InterPro" id="IPR036063">
    <property type="entry name" value="Smr_dom_sf"/>
</dbReference>
<dbReference type="NCBIfam" id="TIGR01069">
    <property type="entry name" value="mutS2"/>
    <property type="match status" value="1"/>
</dbReference>
<dbReference type="PANTHER" id="PTHR48466:SF2">
    <property type="entry name" value="OS10G0509000 PROTEIN"/>
    <property type="match status" value="1"/>
</dbReference>
<dbReference type="PANTHER" id="PTHR48466">
    <property type="entry name" value="OS10G0509000 PROTEIN-RELATED"/>
    <property type="match status" value="1"/>
</dbReference>
<dbReference type="Pfam" id="PF20297">
    <property type="entry name" value="MSSS"/>
    <property type="match status" value="1"/>
</dbReference>
<dbReference type="Pfam" id="PF00488">
    <property type="entry name" value="MutS_V"/>
    <property type="match status" value="1"/>
</dbReference>
<dbReference type="Pfam" id="PF01713">
    <property type="entry name" value="Smr"/>
    <property type="match status" value="1"/>
</dbReference>
<dbReference type="PIRSF" id="PIRSF005814">
    <property type="entry name" value="MutS_YshD"/>
    <property type="match status" value="1"/>
</dbReference>
<dbReference type="SMART" id="SM00534">
    <property type="entry name" value="MUTSac"/>
    <property type="match status" value="1"/>
</dbReference>
<dbReference type="SMART" id="SM00533">
    <property type="entry name" value="MUTSd"/>
    <property type="match status" value="1"/>
</dbReference>
<dbReference type="SMART" id="SM00463">
    <property type="entry name" value="SMR"/>
    <property type="match status" value="1"/>
</dbReference>
<dbReference type="SUPFAM" id="SSF48334">
    <property type="entry name" value="DNA repair protein MutS, domain III"/>
    <property type="match status" value="1"/>
</dbReference>
<dbReference type="SUPFAM" id="SSF52540">
    <property type="entry name" value="P-loop containing nucleoside triphosphate hydrolases"/>
    <property type="match status" value="1"/>
</dbReference>
<dbReference type="SUPFAM" id="SSF160443">
    <property type="entry name" value="SMR domain-like"/>
    <property type="match status" value="1"/>
</dbReference>
<dbReference type="PROSITE" id="PS00486">
    <property type="entry name" value="DNA_MISMATCH_REPAIR_2"/>
    <property type="match status" value="1"/>
</dbReference>
<dbReference type="PROSITE" id="PS50828">
    <property type="entry name" value="SMR"/>
    <property type="match status" value="1"/>
</dbReference>
<evidence type="ECO:0000255" key="1">
    <source>
        <dbReference type="HAMAP-Rule" id="MF_00092"/>
    </source>
</evidence>
<reference key="1">
    <citation type="journal article" date="2007" name="J. Bacteriol.">
        <title>Complete genome of acute rheumatic fever-associated serotype M5 Streptococcus pyogenes strain Manfredo.</title>
        <authorList>
            <person name="Holden M.T.G."/>
            <person name="Scott A."/>
            <person name="Cherevach I."/>
            <person name="Chillingworth T."/>
            <person name="Churcher C."/>
            <person name="Cronin A."/>
            <person name="Dowd L."/>
            <person name="Feltwell T."/>
            <person name="Hamlin N."/>
            <person name="Holroyd S."/>
            <person name="Jagels K."/>
            <person name="Moule S."/>
            <person name="Mungall K."/>
            <person name="Quail M.A."/>
            <person name="Price C."/>
            <person name="Rabbinowitsch E."/>
            <person name="Sharp S."/>
            <person name="Skelton J."/>
            <person name="Whitehead S."/>
            <person name="Barrell B.G."/>
            <person name="Kehoe M."/>
            <person name="Parkhill J."/>
        </authorList>
    </citation>
    <scope>NUCLEOTIDE SEQUENCE [LARGE SCALE GENOMIC DNA]</scope>
    <source>
        <strain>Manfredo</strain>
    </source>
</reference>
<organism>
    <name type="scientific">Streptococcus pyogenes serotype M5 (strain Manfredo)</name>
    <dbReference type="NCBI Taxonomy" id="160491"/>
    <lineage>
        <taxon>Bacteria</taxon>
        <taxon>Bacillati</taxon>
        <taxon>Bacillota</taxon>
        <taxon>Bacilli</taxon>
        <taxon>Lactobacillales</taxon>
        <taxon>Streptococcaceae</taxon>
        <taxon>Streptococcus</taxon>
    </lineage>
</organism>
<keyword id="KW-0067">ATP-binding</keyword>
<keyword id="KW-0238">DNA-binding</keyword>
<keyword id="KW-0255">Endonuclease</keyword>
<keyword id="KW-0378">Hydrolase</keyword>
<keyword id="KW-0540">Nuclease</keyword>
<keyword id="KW-0547">Nucleotide-binding</keyword>
<keyword id="KW-0694">RNA-binding</keyword>
<keyword id="KW-0699">rRNA-binding</keyword>
<gene>
    <name evidence="1" type="primary">mutS2</name>
    <name evidence="1" type="synonym">rqcU</name>
    <name type="ordered locus">SpyM50289</name>
</gene>
<protein>
    <recommendedName>
        <fullName evidence="1">Endonuclease MutS2</fullName>
        <ecNumber evidence="1">3.1.-.-</ecNumber>
    </recommendedName>
    <alternativeName>
        <fullName evidence="1">Ribosome-associated protein quality control-upstream factor</fullName>
        <shortName evidence="1">RQC-upstream factor</shortName>
        <shortName evidence="1">RqcU</shortName>
        <ecNumber evidence="1">3.6.4.-</ecNumber>
    </alternativeName>
</protein>
<comment type="function">
    <text evidence="1">Endonuclease that is involved in the suppression of homologous recombination and thus may have a key role in the control of bacterial genetic diversity.</text>
</comment>
<comment type="function">
    <text evidence="1">Acts as a ribosome collision sensor, splitting the ribosome into its 2 subunits. Detects stalled/collided 70S ribosomes which it binds and splits by an ATP-hydrolysis driven conformational change. Acts upstream of the ribosome quality control system (RQC), a ribosome-associated complex that mediates the extraction of incompletely synthesized nascent chains from stalled ribosomes and their subsequent degradation. Probably generates substrates for RQC.</text>
</comment>
<comment type="subunit">
    <text evidence="1">Homodimer. Binds to stalled ribosomes, contacting rRNA.</text>
</comment>
<comment type="similarity">
    <text evidence="1">Belongs to the DNA mismatch repair MutS family. MutS2 subfamily.</text>
</comment>
<sequence>MNNKILEQLEFNKVKELLLPYLKTEQSQEELLELEPMTEASKIEKSFNEISDMEQIFVEHHSFGIVSLSSISESLKRLELSADLNIQELLAIKKVLQSSSDMIHFYSDLDNVSFQSLDRLFENLEQFPNLQGSFQAINDGGFLEHFASPELERIRRQLTNSERRVRQILQDMLKEKAELLSENLIASRSGRSVLPVKNTYRNRISGVVHDISSSGSTVYIEPRAVVTLNEEITQLRADERHEEGRILHAFSDLLRPHVATIRNNAWILGHLDFVRAKYLFMSDNKATIPKISNDSTLALINVRHPLLSNPVANDLHFDHDLTAIVITGPNTGGKTIMLKTLGLAQLMGQSGLPVLADKGSKIAVFNNIFADIGDEQSIEQSLSTFSSHMTHIVSILNEADHNSLVLFDELGAGTDPQEGASLAMAILEHLRLSHIKTMATTHYPELKAYGIETNFVENASMEFDAETLSPTYRFMQGVPGRSNAFEIASRLGLAPFIVKQAKQMTDSDSDVNRIIEQLEAQTLETRRRLDHIKEVEQENLKFNRAVKKLYNEFSHERDKELEKIYQEAQEIVDMALNESDTILKKLNDKSQLKPHEIIDAKAQIKKLAPQVDLSKNKVLNKAKKIKAARAPRIGDDIIVTSYGQRGTLTSQLKDGRWEAQVGIIKMTLTHDEFTLVRVQEEQKVKNKQINVVKKADSSGPRARLDLRGKRYEEAMQELDHFIDQALLNNMGQVDIIHGIGTGVIREGVTKYLRRHKHVKHFAYAPQNAGGSGATIVTLG</sequence>